<evidence type="ECO:0000250" key="1"/>
<evidence type="ECO:0000255" key="2"/>
<evidence type="ECO:0000305" key="3"/>
<feature type="chain" id="PRO_0000117363" description="NADH-ubiquinone oxidoreductase chain 1">
    <location>
        <begin position="1"/>
        <end position="324"/>
    </location>
</feature>
<feature type="transmembrane region" description="Helical" evidence="2">
    <location>
        <begin position="9"/>
        <end position="29"/>
    </location>
</feature>
<feature type="transmembrane region" description="Helical" evidence="2">
    <location>
        <begin position="75"/>
        <end position="95"/>
    </location>
</feature>
<feature type="transmembrane region" description="Helical" evidence="2">
    <location>
        <begin position="106"/>
        <end position="126"/>
    </location>
</feature>
<feature type="transmembrane region" description="Helical" evidence="2">
    <location>
        <begin position="146"/>
        <end position="166"/>
    </location>
</feature>
<feature type="transmembrane region" description="Helical" evidence="2">
    <location>
        <begin position="177"/>
        <end position="197"/>
    </location>
</feature>
<feature type="transmembrane region" description="Helical" evidence="2">
    <location>
        <begin position="228"/>
        <end position="248"/>
    </location>
</feature>
<feature type="transmembrane region" description="Helical" evidence="2">
    <location>
        <begin position="259"/>
        <end position="279"/>
    </location>
</feature>
<feature type="transmembrane region" description="Helical" evidence="2">
    <location>
        <begin position="299"/>
        <end position="319"/>
    </location>
</feature>
<protein>
    <recommendedName>
        <fullName>NADH-ubiquinone oxidoreductase chain 1</fullName>
        <ecNumber>7.1.1.2</ecNumber>
    </recommendedName>
    <alternativeName>
        <fullName>NADH dehydrogenase subunit 1</fullName>
    </alternativeName>
</protein>
<gene>
    <name type="primary">MT-ND1</name>
    <name type="synonym">MTND1</name>
    <name type="synonym">NADH1</name>
    <name type="synonym">ND1</name>
</gene>
<name>NU1M_CARAU</name>
<organism>
    <name type="scientific">Carassius auratus</name>
    <name type="common">Goldfish</name>
    <dbReference type="NCBI Taxonomy" id="7957"/>
    <lineage>
        <taxon>Eukaryota</taxon>
        <taxon>Metazoa</taxon>
        <taxon>Chordata</taxon>
        <taxon>Craniata</taxon>
        <taxon>Vertebrata</taxon>
        <taxon>Euteleostomi</taxon>
        <taxon>Actinopterygii</taxon>
        <taxon>Neopterygii</taxon>
        <taxon>Teleostei</taxon>
        <taxon>Ostariophysi</taxon>
        <taxon>Cypriniformes</taxon>
        <taxon>Cyprinidae</taxon>
        <taxon>Cyprininae</taxon>
        <taxon>Carassius</taxon>
    </lineage>
</organism>
<accession>O78679</accession>
<proteinExistence type="inferred from homology"/>
<dbReference type="EC" id="7.1.1.2"/>
<dbReference type="EMBL" id="AB006953">
    <property type="protein sequence ID" value="BAA31238.1"/>
    <property type="molecule type" value="Genomic_DNA"/>
</dbReference>
<dbReference type="EMBL" id="AB045144">
    <property type="protein sequence ID" value="BAB40348.1"/>
    <property type="molecule type" value="Genomic_DNA"/>
</dbReference>
<dbReference type="RefSeq" id="NP_008588.1">
    <property type="nucleotide sequence ID" value="NC_002079.1"/>
</dbReference>
<dbReference type="SMR" id="O78679"/>
<dbReference type="GeneID" id="808418"/>
<dbReference type="CTD" id="4535"/>
<dbReference type="OrthoDB" id="531329at2759"/>
<dbReference type="Proteomes" id="UP000515129">
    <property type="component" value="Mitochondrion MT"/>
</dbReference>
<dbReference type="GO" id="GO:0005743">
    <property type="term" value="C:mitochondrial inner membrane"/>
    <property type="evidence" value="ECO:0007669"/>
    <property type="project" value="UniProtKB-SubCell"/>
</dbReference>
<dbReference type="GO" id="GO:0008137">
    <property type="term" value="F:NADH dehydrogenase (ubiquinone) activity"/>
    <property type="evidence" value="ECO:0007669"/>
    <property type="project" value="UniProtKB-EC"/>
</dbReference>
<dbReference type="GO" id="GO:0009060">
    <property type="term" value="P:aerobic respiration"/>
    <property type="evidence" value="ECO:0007669"/>
    <property type="project" value="TreeGrafter"/>
</dbReference>
<dbReference type="HAMAP" id="MF_01350">
    <property type="entry name" value="NDH1_NuoH"/>
    <property type="match status" value="1"/>
</dbReference>
<dbReference type="InterPro" id="IPR001694">
    <property type="entry name" value="NADH_UbQ_OxRdtase_su1/FPO"/>
</dbReference>
<dbReference type="InterPro" id="IPR018086">
    <property type="entry name" value="NADH_UbQ_OxRdtase_su1_CS"/>
</dbReference>
<dbReference type="PANTHER" id="PTHR11432">
    <property type="entry name" value="NADH DEHYDROGENASE SUBUNIT 1"/>
    <property type="match status" value="1"/>
</dbReference>
<dbReference type="PANTHER" id="PTHR11432:SF3">
    <property type="entry name" value="NADH-UBIQUINONE OXIDOREDUCTASE CHAIN 1"/>
    <property type="match status" value="1"/>
</dbReference>
<dbReference type="Pfam" id="PF00146">
    <property type="entry name" value="NADHdh"/>
    <property type="match status" value="1"/>
</dbReference>
<dbReference type="PROSITE" id="PS00667">
    <property type="entry name" value="COMPLEX1_ND1_1"/>
    <property type="match status" value="1"/>
</dbReference>
<dbReference type="PROSITE" id="PS00668">
    <property type="entry name" value="COMPLEX1_ND1_2"/>
    <property type="match status" value="1"/>
</dbReference>
<geneLocation type="mitochondrion"/>
<reference key="1">
    <citation type="journal article" date="1998" name="Zool. Sci.">
        <title>The complete sequence of mitochondrial genome from a gynogenetic triploid 'ginbuna' (Carassius auratus langsdorfi).</title>
        <authorList>
            <person name="Murakami M."/>
            <person name="Yamashita Y."/>
            <person name="Fujitani H."/>
        </authorList>
    </citation>
    <scope>NUCLEOTIDE SEQUENCE [GENOMIC DNA]</scope>
    <source>
        <strain>AZ3 / Langsdorfi</strain>
        <tissue>Oocyte</tissue>
    </source>
</reference>
<reference key="2">
    <citation type="submission" date="2000-06" db="EMBL/GenBank/DDBJ databases">
        <title>Carassius auratus cuvieri mitochondrial DNA, complete sequence.</title>
        <authorList>
            <person name="Murakami M."/>
        </authorList>
    </citation>
    <scope>NUCLEOTIDE SEQUENCE [GENOMIC DNA]</scope>
    <source>
        <strain>Cuvieri</strain>
    </source>
</reference>
<comment type="function">
    <text evidence="1">Core subunit of the mitochondrial membrane respiratory chain NADH dehydrogenase (Complex I) that is believed to belong to the minimal assembly required for catalysis. Complex I functions in the transfer of electrons from NADH to the respiratory chain. The immediate electron acceptor for the enzyme is believed to be ubiquinone (By similarity).</text>
</comment>
<comment type="catalytic activity">
    <reaction>
        <text>a ubiquinone + NADH + 5 H(+)(in) = a ubiquinol + NAD(+) + 4 H(+)(out)</text>
        <dbReference type="Rhea" id="RHEA:29091"/>
        <dbReference type="Rhea" id="RHEA-COMP:9565"/>
        <dbReference type="Rhea" id="RHEA-COMP:9566"/>
        <dbReference type="ChEBI" id="CHEBI:15378"/>
        <dbReference type="ChEBI" id="CHEBI:16389"/>
        <dbReference type="ChEBI" id="CHEBI:17976"/>
        <dbReference type="ChEBI" id="CHEBI:57540"/>
        <dbReference type="ChEBI" id="CHEBI:57945"/>
        <dbReference type="EC" id="7.1.1.2"/>
    </reaction>
</comment>
<comment type="subcellular location">
    <subcellularLocation>
        <location evidence="1">Mitochondrion inner membrane</location>
        <topology evidence="1">Multi-pass membrane protein</topology>
    </subcellularLocation>
</comment>
<comment type="similarity">
    <text evidence="3">Belongs to the complex I subunit 1 family.</text>
</comment>
<sequence length="324" mass="35605">MLNTLMTHLINPLAYIVPVLLAVAFLTLIERKVLGYMQLRKGPNVVGPYGLLQPIADGVKLFIKEPVRPSTSSPFLFLAAPVLALTLAMTLWAPMPMPHPVTDLNLGILFILALSSLAVYSILGSGWASNSKYALIGALRAVAQTISYEVSLGLILLSVIIFSGGYTLQTFNTTQESIWLLIPAWPLAAMWYISTLAETNRAPFDLTEGESELVSGFNVEYAGGPFALFFLAEYANILLMNTLSAVLFLGASHIPNMPELTTINLMTKAALLSILFLWVRASYPRFRYDQLMHLVWKNFLPLTLAFVLWHTALPIALAGLPPQL</sequence>
<keyword id="KW-0249">Electron transport</keyword>
<keyword id="KW-0472">Membrane</keyword>
<keyword id="KW-0496">Mitochondrion</keyword>
<keyword id="KW-0999">Mitochondrion inner membrane</keyword>
<keyword id="KW-0520">NAD</keyword>
<keyword id="KW-1185">Reference proteome</keyword>
<keyword id="KW-0679">Respiratory chain</keyword>
<keyword id="KW-1278">Translocase</keyword>
<keyword id="KW-0812">Transmembrane</keyword>
<keyword id="KW-1133">Transmembrane helix</keyword>
<keyword id="KW-0813">Transport</keyword>
<keyword id="KW-0830">Ubiquinone</keyword>